<accession>P0DP28</accession>
<accession>P02593</accession>
<accession>P62204</accession>
<accession>P70667</accession>
<accession>P99014</accession>
<accession>Q3TEH7</accession>
<accession>Q3THK5</accession>
<accession>Q3U6Z5</accession>
<accession>Q3U7C7</accession>
<accession>Q498A3</accession>
<accession>Q61379</accession>
<accession>Q61380</accession>
<accession>Q8BNC9</accession>
<accession>Q91VQ9</accession>
<accession>Q9D6G4</accession>
<protein>
    <recommendedName>
        <fullName evidence="2">Calmodulin-3</fullName>
    </recommendedName>
</protein>
<gene>
    <name evidence="13" type="primary">Calm3</name>
    <name type="synonym">Cam3</name>
    <name type="synonym">Camc</name>
</gene>
<dbReference type="EMBL" id="M19380">
    <property type="protein sequence ID" value="AAA66181.1"/>
    <property type="molecule type" value="mRNA"/>
</dbReference>
<dbReference type="EMBL" id="AK083996">
    <property type="protein sequence ID" value="BAC39089.2"/>
    <property type="status" value="ALT_SEQ"/>
    <property type="molecule type" value="mRNA"/>
</dbReference>
<dbReference type="EMBL" id="AK151610">
    <property type="protein sequence ID" value="BAE30549.1"/>
    <property type="molecule type" value="mRNA"/>
</dbReference>
<dbReference type="EMBL" id="AK152754">
    <property type="protein sequence ID" value="BAE31469.1"/>
    <property type="molecule type" value="mRNA"/>
</dbReference>
<dbReference type="EMBL" id="AK153179">
    <property type="protein sequence ID" value="BAE31782.1"/>
    <property type="molecule type" value="mRNA"/>
</dbReference>
<dbReference type="EMBL" id="BC050926">
    <property type="protein sequence ID" value="AAH50926.1"/>
    <property type="molecule type" value="mRNA"/>
</dbReference>
<dbReference type="CCDS" id="CCDS39789.1"/>
<dbReference type="PIR" id="S37707">
    <property type="entry name" value="S37707"/>
</dbReference>
<dbReference type="RefSeq" id="NP_031615.1">
    <property type="nucleotide sequence ID" value="NM_007589.5"/>
</dbReference>
<dbReference type="RefSeq" id="NP_031616.1">
    <property type="nucleotide sequence ID" value="NM_007590.3"/>
</dbReference>
<dbReference type="EMDB" id="EMD-37261"/>
<dbReference type="SMR" id="P0DP28"/>
<dbReference type="FunCoup" id="P0DP28">
    <property type="interactions" value="4166"/>
</dbReference>
<dbReference type="iPTMnet" id="P0DP28"/>
<dbReference type="jPOST" id="P0DP28"/>
<dbReference type="Pumba" id="P0DP28"/>
<dbReference type="Antibodypedia" id="39411">
    <property type="antibodies" value="192 antibodies from 17 providers"/>
</dbReference>
<dbReference type="Antibodypedia" id="4344">
    <property type="antibodies" value="514 antibodies from 34 providers"/>
</dbReference>
<dbReference type="Antibodypedia" id="53945">
    <property type="antibodies" value="71 antibodies from 14 providers"/>
</dbReference>
<dbReference type="DNASU" id="12313"/>
<dbReference type="Ensembl" id="ENSMUST00000019514.10">
    <property type="protein sequence ID" value="ENSMUSP00000019514.10"/>
    <property type="gene ID" value="ENSMUSG00000019370.11"/>
</dbReference>
<dbReference type="Ensembl" id="ENSMUST00000040440.7">
    <property type="protein sequence ID" value="ENSMUSP00000048857.7"/>
    <property type="gene ID" value="ENSMUSG00000036438.15"/>
</dbReference>
<dbReference type="Ensembl" id="ENSMUST00000110082.11">
    <property type="protein sequence ID" value="ENSMUSP00000105709.4"/>
    <property type="gene ID" value="ENSMUSG00000001175.17"/>
</dbReference>
<dbReference type="GeneID" id="12314"/>
<dbReference type="GeneID" id="12315"/>
<dbReference type="KEGG" id="mmu:12313"/>
<dbReference type="KEGG" id="mmu:12314"/>
<dbReference type="KEGG" id="mmu:12315"/>
<dbReference type="AGR" id="MGI:103249"/>
<dbReference type="CTD" id="801"/>
<dbReference type="CTD" id="805"/>
<dbReference type="CTD" id="808"/>
<dbReference type="MGI" id="MGI:103249">
    <property type="gene designation" value="Calm3"/>
</dbReference>
<dbReference type="VEuPathDB" id="HostDB:ENSMUSG00000001175"/>
<dbReference type="VEuPathDB" id="HostDB:ENSMUSG00000019370"/>
<dbReference type="VEuPathDB" id="HostDB:ENSMUSG00000036438"/>
<dbReference type="GeneTree" id="ENSGT00950000182980"/>
<dbReference type="InParanoid" id="P0DP28"/>
<dbReference type="OMA" id="ARKMKEC"/>
<dbReference type="OrthoDB" id="9559602at2759"/>
<dbReference type="BioGRID-ORCS" id="12313">
    <property type="hits" value="7 hits in 81 CRISPR screens"/>
</dbReference>
<dbReference type="BioGRID-ORCS" id="12314">
    <property type="hits" value="4 hits in 74 CRISPR screens"/>
</dbReference>
<dbReference type="BioGRID-ORCS" id="12315">
    <property type="hits" value="1 hit in 77 CRISPR screens"/>
</dbReference>
<dbReference type="CD-CODE" id="CE726F99">
    <property type="entry name" value="Postsynaptic density"/>
</dbReference>
<dbReference type="ChiTaRS" id="Calm3">
    <property type="organism name" value="mouse"/>
</dbReference>
<dbReference type="PRO" id="PR:P0DP28"/>
<dbReference type="Proteomes" id="UP000000589">
    <property type="component" value="Chromosome 12"/>
</dbReference>
<dbReference type="Proteomes" id="UP000000589">
    <property type="component" value="Chromosome 17"/>
</dbReference>
<dbReference type="Proteomes" id="UP000000589">
    <property type="component" value="Chromosome 7"/>
</dbReference>
<dbReference type="RNAct" id="P0DP28">
    <property type="molecule type" value="protein"/>
</dbReference>
<dbReference type="Bgee" id="ENSMUSG00000001175">
    <property type="expression patterns" value="Expressed in ureter smooth muscle and 283 other cell types or tissues"/>
</dbReference>
<dbReference type="ExpressionAtlas" id="P0DP28">
    <property type="expression patterns" value="baseline and differential"/>
</dbReference>
<dbReference type="GO" id="GO:0034704">
    <property type="term" value="C:calcium channel complex"/>
    <property type="evidence" value="ECO:0007669"/>
    <property type="project" value="Ensembl"/>
</dbReference>
<dbReference type="GO" id="GO:0044305">
    <property type="term" value="C:calyx of Held"/>
    <property type="evidence" value="ECO:0000314"/>
    <property type="project" value="SynGO"/>
</dbReference>
<dbReference type="GO" id="GO:1902494">
    <property type="term" value="C:catalytic complex"/>
    <property type="evidence" value="ECO:0007669"/>
    <property type="project" value="Ensembl"/>
</dbReference>
<dbReference type="GO" id="GO:0005813">
    <property type="term" value="C:centrosome"/>
    <property type="evidence" value="ECO:0007669"/>
    <property type="project" value="Ensembl"/>
</dbReference>
<dbReference type="GO" id="GO:0030426">
    <property type="term" value="C:growth cone"/>
    <property type="evidence" value="ECO:0007669"/>
    <property type="project" value="Ensembl"/>
</dbReference>
<dbReference type="GO" id="GO:0031966">
    <property type="term" value="C:mitochondrial membrane"/>
    <property type="evidence" value="ECO:0007669"/>
    <property type="project" value="Ensembl"/>
</dbReference>
<dbReference type="GO" id="GO:0043209">
    <property type="term" value="C:myelin sheath"/>
    <property type="evidence" value="ECO:0000314"/>
    <property type="project" value="CAFA"/>
</dbReference>
<dbReference type="GO" id="GO:0099524">
    <property type="term" value="C:postsynaptic cytosol"/>
    <property type="evidence" value="ECO:0007669"/>
    <property type="project" value="Ensembl"/>
</dbReference>
<dbReference type="GO" id="GO:0099523">
    <property type="term" value="C:presynaptic cytosol"/>
    <property type="evidence" value="ECO:0007669"/>
    <property type="project" value="Ensembl"/>
</dbReference>
<dbReference type="GO" id="GO:0030017">
    <property type="term" value="C:sarcomere"/>
    <property type="evidence" value="ECO:0007669"/>
    <property type="project" value="Ensembl"/>
</dbReference>
<dbReference type="GO" id="GO:0098685">
    <property type="term" value="C:Schaffer collateral - CA1 synapse"/>
    <property type="evidence" value="ECO:0007669"/>
    <property type="project" value="Ensembl"/>
</dbReference>
<dbReference type="GO" id="GO:0005876">
    <property type="term" value="C:spindle microtubule"/>
    <property type="evidence" value="ECO:0007669"/>
    <property type="project" value="Ensembl"/>
</dbReference>
<dbReference type="GO" id="GO:0000922">
    <property type="term" value="C:spindle pole"/>
    <property type="evidence" value="ECO:0007669"/>
    <property type="project" value="UniProtKB-SubCell"/>
</dbReference>
<dbReference type="GO" id="GO:0030672">
    <property type="term" value="C:synaptic vesicle membrane"/>
    <property type="evidence" value="ECO:0007669"/>
    <property type="project" value="Ensembl"/>
</dbReference>
<dbReference type="GO" id="GO:0008076">
    <property type="term" value="C:voltage-gated potassium channel complex"/>
    <property type="evidence" value="ECO:0000316"/>
    <property type="project" value="MGI"/>
</dbReference>
<dbReference type="GO" id="GO:0010856">
    <property type="term" value="F:adenylate cyclase activator activity"/>
    <property type="evidence" value="ECO:0007669"/>
    <property type="project" value="Ensembl"/>
</dbReference>
<dbReference type="GO" id="GO:0008179">
    <property type="term" value="F:adenylate cyclase binding"/>
    <property type="evidence" value="ECO:0007669"/>
    <property type="project" value="Ensembl"/>
</dbReference>
<dbReference type="GO" id="GO:0019855">
    <property type="term" value="F:calcium channel inhibitor activity"/>
    <property type="evidence" value="ECO:0007669"/>
    <property type="project" value="Ensembl"/>
</dbReference>
<dbReference type="GO" id="GO:0005509">
    <property type="term" value="F:calcium ion binding"/>
    <property type="evidence" value="ECO:0000250"/>
    <property type="project" value="UniProtKB"/>
</dbReference>
<dbReference type="GO" id="GO:0048306">
    <property type="term" value="F:calcium-dependent protein binding"/>
    <property type="evidence" value="ECO:0007669"/>
    <property type="project" value="Ensembl"/>
</dbReference>
<dbReference type="GO" id="GO:0050998">
    <property type="term" value="F:nitric-oxide synthase binding"/>
    <property type="evidence" value="ECO:0007669"/>
    <property type="project" value="Ensembl"/>
</dbReference>
<dbReference type="GO" id="GO:0030235">
    <property type="term" value="F:nitric-oxide synthase regulator activity"/>
    <property type="evidence" value="ECO:0007669"/>
    <property type="project" value="Ensembl"/>
</dbReference>
<dbReference type="GO" id="GO:0043548">
    <property type="term" value="F:phosphatidylinositol 3-kinase binding"/>
    <property type="evidence" value="ECO:0007669"/>
    <property type="project" value="Ensembl"/>
</dbReference>
<dbReference type="GO" id="GO:0019904">
    <property type="term" value="F:protein domain specific binding"/>
    <property type="evidence" value="ECO:0007669"/>
    <property type="project" value="Ensembl"/>
</dbReference>
<dbReference type="GO" id="GO:0019901">
    <property type="term" value="F:protein kinase binding"/>
    <property type="evidence" value="ECO:0007669"/>
    <property type="project" value="Ensembl"/>
</dbReference>
<dbReference type="GO" id="GO:0072542">
    <property type="term" value="F:protein phosphatase activator activity"/>
    <property type="evidence" value="ECO:0007669"/>
    <property type="project" value="Ensembl"/>
</dbReference>
<dbReference type="GO" id="GO:0043539">
    <property type="term" value="F:protein serine/threonine kinase activator activity"/>
    <property type="evidence" value="ECO:0007669"/>
    <property type="project" value="Ensembl"/>
</dbReference>
<dbReference type="GO" id="GO:0031432">
    <property type="term" value="F:titin binding"/>
    <property type="evidence" value="ECO:0007669"/>
    <property type="project" value="Ensembl"/>
</dbReference>
<dbReference type="GO" id="GO:0044325">
    <property type="term" value="F:transmembrane transporter binding"/>
    <property type="evidence" value="ECO:0007669"/>
    <property type="project" value="Ensembl"/>
</dbReference>
<dbReference type="GO" id="GO:0031800">
    <property type="term" value="F:type 3 metabotropic glutamate receptor binding"/>
    <property type="evidence" value="ECO:0007669"/>
    <property type="project" value="Ensembl"/>
</dbReference>
<dbReference type="GO" id="GO:0016240">
    <property type="term" value="P:autophagosome membrane docking"/>
    <property type="evidence" value="ECO:0007669"/>
    <property type="project" value="Ensembl"/>
</dbReference>
<dbReference type="GO" id="GO:0097720">
    <property type="term" value="P:calcineurin-mediated signaling"/>
    <property type="evidence" value="ECO:0007669"/>
    <property type="project" value="Ensembl"/>
</dbReference>
<dbReference type="GO" id="GO:0035458">
    <property type="term" value="P:cellular response to interferon-beta"/>
    <property type="evidence" value="ECO:0007669"/>
    <property type="project" value="Ensembl"/>
</dbReference>
<dbReference type="GO" id="GO:0071346">
    <property type="term" value="P:cellular response to type II interferon"/>
    <property type="evidence" value="ECO:0007669"/>
    <property type="project" value="Ensembl"/>
</dbReference>
<dbReference type="GO" id="GO:0005513">
    <property type="term" value="P:detection of calcium ion"/>
    <property type="evidence" value="ECO:0007669"/>
    <property type="project" value="Ensembl"/>
</dbReference>
<dbReference type="GO" id="GO:0090151">
    <property type="term" value="P:establishment of protein localization to mitochondrial membrane"/>
    <property type="evidence" value="ECO:0007669"/>
    <property type="project" value="Ensembl"/>
</dbReference>
<dbReference type="GO" id="GO:0000086">
    <property type="term" value="P:G2/M transition of mitotic cell cycle"/>
    <property type="evidence" value="ECO:0000314"/>
    <property type="project" value="MGI"/>
</dbReference>
<dbReference type="GO" id="GO:1990456">
    <property type="term" value="P:mitochondrion-endoplasmic reticulum membrane tethering"/>
    <property type="evidence" value="ECO:0007669"/>
    <property type="project" value="Ensembl"/>
</dbReference>
<dbReference type="GO" id="GO:1901842">
    <property type="term" value="P:negative regulation of high voltage-gated calcium channel activity"/>
    <property type="evidence" value="ECO:0000250"/>
    <property type="project" value="UniProtKB"/>
</dbReference>
<dbReference type="GO" id="GO:0046427">
    <property type="term" value="P:positive regulation of receptor signaling pathway via JAK-STAT"/>
    <property type="evidence" value="ECO:0007669"/>
    <property type="project" value="Ensembl"/>
</dbReference>
<dbReference type="GO" id="GO:0140238">
    <property type="term" value="P:presynaptic endocytosis"/>
    <property type="evidence" value="ECO:0000314"/>
    <property type="project" value="SynGO"/>
</dbReference>
<dbReference type="GO" id="GO:0098901">
    <property type="term" value="P:regulation of cardiac muscle cell action potential"/>
    <property type="evidence" value="ECO:0000250"/>
    <property type="project" value="UniProtKB"/>
</dbReference>
<dbReference type="GO" id="GO:0055117">
    <property type="term" value="P:regulation of cardiac muscle contraction"/>
    <property type="evidence" value="ECO:0007669"/>
    <property type="project" value="Ensembl"/>
</dbReference>
<dbReference type="GO" id="GO:0032465">
    <property type="term" value="P:regulation of cytokinesis"/>
    <property type="evidence" value="ECO:0007669"/>
    <property type="project" value="Ensembl"/>
</dbReference>
<dbReference type="GO" id="GO:0002027">
    <property type="term" value="P:regulation of heart rate"/>
    <property type="evidence" value="ECO:0007669"/>
    <property type="project" value="Ensembl"/>
</dbReference>
<dbReference type="GO" id="GO:0010880">
    <property type="term" value="P:regulation of release of sequestered calcium ion into cytosol by sarcoplasmic reticulum"/>
    <property type="evidence" value="ECO:0007669"/>
    <property type="project" value="Ensembl"/>
</dbReference>
<dbReference type="GO" id="GO:1900242">
    <property type="term" value="P:regulation of synaptic vesicle endocytosis"/>
    <property type="evidence" value="ECO:0007669"/>
    <property type="project" value="Ensembl"/>
</dbReference>
<dbReference type="GO" id="GO:2000300">
    <property type="term" value="P:regulation of synaptic vesicle exocytosis"/>
    <property type="evidence" value="ECO:0007669"/>
    <property type="project" value="Ensembl"/>
</dbReference>
<dbReference type="GO" id="GO:0001975">
    <property type="term" value="P:response to amphetamine"/>
    <property type="evidence" value="ECO:0007669"/>
    <property type="project" value="Ensembl"/>
</dbReference>
<dbReference type="GO" id="GO:0051412">
    <property type="term" value="P:response to corticosterone"/>
    <property type="evidence" value="ECO:0007669"/>
    <property type="project" value="Ensembl"/>
</dbReference>
<dbReference type="CDD" id="cd00051">
    <property type="entry name" value="EFh"/>
    <property type="match status" value="2"/>
</dbReference>
<dbReference type="FunFam" id="1.10.238.10:FF:000527">
    <property type="entry name" value="Calmodulin-3"/>
    <property type="match status" value="1"/>
</dbReference>
<dbReference type="Gene3D" id="1.10.238.10">
    <property type="entry name" value="EF-hand"/>
    <property type="match status" value="3"/>
</dbReference>
<dbReference type="InterPro" id="IPR050230">
    <property type="entry name" value="CALM/Myosin/TropC-like"/>
</dbReference>
<dbReference type="InterPro" id="IPR011992">
    <property type="entry name" value="EF-hand-dom_pair"/>
</dbReference>
<dbReference type="InterPro" id="IPR018247">
    <property type="entry name" value="EF_Hand_1_Ca_BS"/>
</dbReference>
<dbReference type="InterPro" id="IPR002048">
    <property type="entry name" value="EF_hand_dom"/>
</dbReference>
<dbReference type="PANTHER" id="PTHR23048:SF0">
    <property type="entry name" value="CALMODULIN LIKE 3"/>
    <property type="match status" value="1"/>
</dbReference>
<dbReference type="PANTHER" id="PTHR23048">
    <property type="entry name" value="MYOSIN LIGHT CHAIN 1, 3"/>
    <property type="match status" value="1"/>
</dbReference>
<dbReference type="Pfam" id="PF13499">
    <property type="entry name" value="EF-hand_7"/>
    <property type="match status" value="2"/>
</dbReference>
<dbReference type="PRINTS" id="PR00450">
    <property type="entry name" value="RECOVERIN"/>
</dbReference>
<dbReference type="SMART" id="SM00054">
    <property type="entry name" value="EFh"/>
    <property type="match status" value="4"/>
</dbReference>
<dbReference type="SUPFAM" id="SSF47473">
    <property type="entry name" value="EF-hand"/>
    <property type="match status" value="1"/>
</dbReference>
<dbReference type="PROSITE" id="PS00018">
    <property type="entry name" value="EF_HAND_1"/>
    <property type="match status" value="4"/>
</dbReference>
<dbReference type="PROSITE" id="PS50222">
    <property type="entry name" value="EF_HAND_2"/>
    <property type="match status" value="4"/>
</dbReference>
<keyword id="KW-0007">Acetylation</keyword>
<keyword id="KW-0106">Calcium</keyword>
<keyword id="KW-0963">Cytoplasm</keyword>
<keyword id="KW-0206">Cytoskeleton</keyword>
<keyword id="KW-0903">Direct protein sequencing</keyword>
<keyword id="KW-1017">Isopeptide bond</keyword>
<keyword id="KW-0479">Metal-binding</keyword>
<keyword id="KW-0488">Methylation</keyword>
<keyword id="KW-0597">Phosphoprotein</keyword>
<keyword id="KW-1185">Reference proteome</keyword>
<keyword id="KW-0677">Repeat</keyword>
<keyword id="KW-0832">Ubl conjugation</keyword>
<organism>
    <name type="scientific">Mus musculus</name>
    <name type="common">Mouse</name>
    <dbReference type="NCBI Taxonomy" id="10090"/>
    <lineage>
        <taxon>Eukaryota</taxon>
        <taxon>Metazoa</taxon>
        <taxon>Chordata</taxon>
        <taxon>Craniata</taxon>
        <taxon>Vertebrata</taxon>
        <taxon>Euteleostomi</taxon>
        <taxon>Mammalia</taxon>
        <taxon>Eutheria</taxon>
        <taxon>Euarchontoglires</taxon>
        <taxon>Glires</taxon>
        <taxon>Rodentia</taxon>
        <taxon>Myomorpha</taxon>
        <taxon>Muroidea</taxon>
        <taxon>Muridae</taxon>
        <taxon>Murinae</taxon>
        <taxon>Mus</taxon>
        <taxon>Mus</taxon>
    </lineage>
</organism>
<reference key="1">
    <citation type="journal article" date="1988" name="J. Biol. Chem.">
        <title>The abundance of calmodulin mRNAs is regulated in phosphorylase kinase-deficient skeletal muscle.</title>
        <authorList>
            <person name="Bender P.K."/>
            <person name="Dedman J.R."/>
            <person name="Emerson C.P. Jr."/>
        </authorList>
    </citation>
    <scope>NUCLEOTIDE SEQUENCE [MRNA]</scope>
</reference>
<reference key="2">
    <citation type="journal article" date="2005" name="Science">
        <title>The transcriptional landscape of the mammalian genome.</title>
        <authorList>
            <person name="Carninci P."/>
            <person name="Kasukawa T."/>
            <person name="Katayama S."/>
            <person name="Gough J."/>
            <person name="Frith M.C."/>
            <person name="Maeda N."/>
            <person name="Oyama R."/>
            <person name="Ravasi T."/>
            <person name="Lenhard B."/>
            <person name="Wells C."/>
            <person name="Kodzius R."/>
            <person name="Shimokawa K."/>
            <person name="Bajic V.B."/>
            <person name="Brenner S.E."/>
            <person name="Batalov S."/>
            <person name="Forrest A.R."/>
            <person name="Zavolan M."/>
            <person name="Davis M.J."/>
            <person name="Wilming L.G."/>
            <person name="Aidinis V."/>
            <person name="Allen J.E."/>
            <person name="Ambesi-Impiombato A."/>
            <person name="Apweiler R."/>
            <person name="Aturaliya R.N."/>
            <person name="Bailey T.L."/>
            <person name="Bansal M."/>
            <person name="Baxter L."/>
            <person name="Beisel K.W."/>
            <person name="Bersano T."/>
            <person name="Bono H."/>
            <person name="Chalk A.M."/>
            <person name="Chiu K.P."/>
            <person name="Choudhary V."/>
            <person name="Christoffels A."/>
            <person name="Clutterbuck D.R."/>
            <person name="Crowe M.L."/>
            <person name="Dalla E."/>
            <person name="Dalrymple B.P."/>
            <person name="de Bono B."/>
            <person name="Della Gatta G."/>
            <person name="di Bernardo D."/>
            <person name="Down T."/>
            <person name="Engstrom P."/>
            <person name="Fagiolini M."/>
            <person name="Faulkner G."/>
            <person name="Fletcher C.F."/>
            <person name="Fukushima T."/>
            <person name="Furuno M."/>
            <person name="Futaki S."/>
            <person name="Gariboldi M."/>
            <person name="Georgii-Hemming P."/>
            <person name="Gingeras T.R."/>
            <person name="Gojobori T."/>
            <person name="Green R.E."/>
            <person name="Gustincich S."/>
            <person name="Harbers M."/>
            <person name="Hayashi Y."/>
            <person name="Hensch T.K."/>
            <person name="Hirokawa N."/>
            <person name="Hill D."/>
            <person name="Huminiecki L."/>
            <person name="Iacono M."/>
            <person name="Ikeo K."/>
            <person name="Iwama A."/>
            <person name="Ishikawa T."/>
            <person name="Jakt M."/>
            <person name="Kanapin A."/>
            <person name="Katoh M."/>
            <person name="Kawasawa Y."/>
            <person name="Kelso J."/>
            <person name="Kitamura H."/>
            <person name="Kitano H."/>
            <person name="Kollias G."/>
            <person name="Krishnan S.P."/>
            <person name="Kruger A."/>
            <person name="Kummerfeld S.K."/>
            <person name="Kurochkin I.V."/>
            <person name="Lareau L.F."/>
            <person name="Lazarevic D."/>
            <person name="Lipovich L."/>
            <person name="Liu J."/>
            <person name="Liuni S."/>
            <person name="McWilliam S."/>
            <person name="Madan Babu M."/>
            <person name="Madera M."/>
            <person name="Marchionni L."/>
            <person name="Matsuda H."/>
            <person name="Matsuzawa S."/>
            <person name="Miki H."/>
            <person name="Mignone F."/>
            <person name="Miyake S."/>
            <person name="Morris K."/>
            <person name="Mottagui-Tabar S."/>
            <person name="Mulder N."/>
            <person name="Nakano N."/>
            <person name="Nakauchi H."/>
            <person name="Ng P."/>
            <person name="Nilsson R."/>
            <person name="Nishiguchi S."/>
            <person name="Nishikawa S."/>
            <person name="Nori F."/>
            <person name="Ohara O."/>
            <person name="Okazaki Y."/>
            <person name="Orlando V."/>
            <person name="Pang K.C."/>
            <person name="Pavan W.J."/>
            <person name="Pavesi G."/>
            <person name="Pesole G."/>
            <person name="Petrovsky N."/>
            <person name="Piazza S."/>
            <person name="Reed J."/>
            <person name="Reid J.F."/>
            <person name="Ring B.Z."/>
            <person name="Ringwald M."/>
            <person name="Rost B."/>
            <person name="Ruan Y."/>
            <person name="Salzberg S.L."/>
            <person name="Sandelin A."/>
            <person name="Schneider C."/>
            <person name="Schoenbach C."/>
            <person name="Sekiguchi K."/>
            <person name="Semple C.A."/>
            <person name="Seno S."/>
            <person name="Sessa L."/>
            <person name="Sheng Y."/>
            <person name="Shibata Y."/>
            <person name="Shimada H."/>
            <person name="Shimada K."/>
            <person name="Silva D."/>
            <person name="Sinclair B."/>
            <person name="Sperling S."/>
            <person name="Stupka E."/>
            <person name="Sugiura K."/>
            <person name="Sultana R."/>
            <person name="Takenaka Y."/>
            <person name="Taki K."/>
            <person name="Tammoja K."/>
            <person name="Tan S.L."/>
            <person name="Tang S."/>
            <person name="Taylor M.S."/>
            <person name="Tegner J."/>
            <person name="Teichmann S.A."/>
            <person name="Ueda H.R."/>
            <person name="van Nimwegen E."/>
            <person name="Verardo R."/>
            <person name="Wei C.L."/>
            <person name="Yagi K."/>
            <person name="Yamanishi H."/>
            <person name="Zabarovsky E."/>
            <person name="Zhu S."/>
            <person name="Zimmer A."/>
            <person name="Hide W."/>
            <person name="Bult C."/>
            <person name="Grimmond S.M."/>
            <person name="Teasdale R.D."/>
            <person name="Liu E.T."/>
            <person name="Brusic V."/>
            <person name="Quackenbush J."/>
            <person name="Wahlestedt C."/>
            <person name="Mattick J.S."/>
            <person name="Hume D.A."/>
            <person name="Kai C."/>
            <person name="Sasaki D."/>
            <person name="Tomaru Y."/>
            <person name="Fukuda S."/>
            <person name="Kanamori-Katayama M."/>
            <person name="Suzuki M."/>
            <person name="Aoki J."/>
            <person name="Arakawa T."/>
            <person name="Iida J."/>
            <person name="Imamura K."/>
            <person name="Itoh M."/>
            <person name="Kato T."/>
            <person name="Kawaji H."/>
            <person name="Kawagashira N."/>
            <person name="Kawashima T."/>
            <person name="Kojima M."/>
            <person name="Kondo S."/>
            <person name="Konno H."/>
            <person name="Nakano K."/>
            <person name="Ninomiya N."/>
            <person name="Nishio T."/>
            <person name="Okada M."/>
            <person name="Plessy C."/>
            <person name="Shibata K."/>
            <person name="Shiraki T."/>
            <person name="Suzuki S."/>
            <person name="Tagami M."/>
            <person name="Waki K."/>
            <person name="Watahiki A."/>
            <person name="Okamura-Oho Y."/>
            <person name="Suzuki H."/>
            <person name="Kawai J."/>
            <person name="Hayashizaki Y."/>
        </authorList>
    </citation>
    <scope>NUCLEOTIDE SEQUENCE [LARGE SCALE MRNA]</scope>
    <source>
        <strain>C57BL/6J</strain>
        <strain>DBA/2J</strain>
        <strain>NOD</strain>
        <tissue>Amnion</tissue>
        <tissue>Bone marrow</tissue>
        <tissue>Colon</tissue>
        <tissue>Hippocampus</tissue>
        <tissue>Kidney</tissue>
        <tissue>Liver</tissue>
        <tissue>Lung</tissue>
        <tissue>Mammary gland</tissue>
        <tissue>Ovary</tissue>
        <tissue>Placenta</tissue>
        <tissue>Stomach</tissue>
        <tissue>Testis</tissue>
        <tissue>Thymus</tissue>
        <tissue>Tongue</tissue>
    </source>
</reference>
<reference key="3">
    <citation type="journal article" date="2004" name="Genome Res.">
        <title>The status, quality, and expansion of the NIH full-length cDNA project: the Mammalian Gene Collection (MGC).</title>
        <authorList>
            <consortium name="The MGC Project Team"/>
        </authorList>
    </citation>
    <scope>NUCLEOTIDE SEQUENCE [LARGE SCALE MRNA]</scope>
    <source>
        <strain>129</strain>
        <strain>C57BL/6J</strain>
        <strain>Czech II</strain>
        <tissue>Brain</tissue>
        <tissue>Mammary tumor</tissue>
        <tissue>Placenta</tissue>
        <tissue>Spinal ganglion</tissue>
    </source>
</reference>
<reference key="4">
    <citation type="submission" date="2005-07" db="UniProtKB">
        <authorList>
            <person name="Bienvenut W.V."/>
        </authorList>
    </citation>
    <scope>PROTEIN SEQUENCE OF 2-14</scope>
    <scope>CLEAVAGE OF INITIATOR METHIONINE</scope>
    <scope>ACETYLATION AT ALA-2</scope>
    <scope>IDENTIFICATION BY MASS SPECTROMETRY</scope>
    <source>
        <strain>C57BL/6J</strain>
        <tissue>Liver</tissue>
    </source>
</reference>
<reference key="5">
    <citation type="submission" date="2007-04" db="UniProtKB">
        <authorList>
            <person name="Lubec G."/>
            <person name="Klug S."/>
            <person name="Kang S.U."/>
        </authorList>
    </citation>
    <scope>PROTEIN SEQUENCE OF 15-31; 79-87 AND 92-107</scope>
    <scope>IDENTIFICATION BY MASS SPECTROMETRY</scope>
    <source>
        <strain>C57BL/6J</strain>
        <tissue>Brain</tissue>
        <tissue>Hippocampus</tissue>
    </source>
</reference>
<reference key="6">
    <citation type="journal article" date="2008" name="J. Biol. Chem.">
        <title>S100A1 and calmodulin compete for the same binding site on ryanodine receptor.</title>
        <authorList>
            <person name="Wright N.T."/>
            <person name="Prosser B.L."/>
            <person name="Varney K.M."/>
            <person name="Zimmer D.B."/>
            <person name="Schneider M.F."/>
            <person name="Weber D.J."/>
        </authorList>
    </citation>
    <scope>INTERACTION WITH RYR1 AND RYR2</scope>
</reference>
<reference key="7">
    <citation type="journal article" date="2008" name="J. Proteome Res.">
        <title>Large-scale identification and evolution indexing of tyrosine phosphorylation sites from murine brain.</title>
        <authorList>
            <person name="Ballif B.A."/>
            <person name="Carey G.R."/>
            <person name="Sunyaev S.R."/>
            <person name="Gygi S.P."/>
        </authorList>
    </citation>
    <scope>PHOSPHORYLATION [LARGE SCALE ANALYSIS] AT TYR-100</scope>
    <scope>IDENTIFICATION BY MASS SPECTROMETRY [LARGE SCALE ANALYSIS]</scope>
    <source>
        <tissue>Brain</tissue>
    </source>
</reference>
<reference key="8">
    <citation type="journal article" date="2010" name="Cell">
        <title>A tissue-specific atlas of mouse protein phosphorylation and expression.</title>
        <authorList>
            <person name="Huttlin E.L."/>
            <person name="Jedrychowski M.P."/>
            <person name="Elias J.E."/>
            <person name="Goswami T."/>
            <person name="Rad R."/>
            <person name="Beausoleil S.A."/>
            <person name="Villen J."/>
            <person name="Haas W."/>
            <person name="Sowa M.E."/>
            <person name="Gygi S.P."/>
        </authorList>
    </citation>
    <scope>PHOSPHORYLATION [LARGE SCALE ANALYSIS] AT TYR-100 AND SER-102</scope>
    <scope>IDENTIFICATION BY MASS SPECTROMETRY [LARGE SCALE ANALYSIS]</scope>
    <source>
        <tissue>Brain</tissue>
        <tissue>Brown adipose tissue</tissue>
        <tissue>Heart</tissue>
        <tissue>Kidney</tissue>
        <tissue>Liver</tissue>
        <tissue>Lung</tissue>
        <tissue>Pancreas</tissue>
        <tissue>Spleen</tissue>
        <tissue>Testis</tissue>
    </source>
</reference>
<reference key="9">
    <citation type="journal article" date="2013" name="Mol. Cell">
        <title>SIRT5-mediated lysine desuccinylation impacts diverse metabolic pathways.</title>
        <authorList>
            <person name="Park J."/>
            <person name="Chen Y."/>
            <person name="Tishkoff D.X."/>
            <person name="Peng C."/>
            <person name="Tan M."/>
            <person name="Dai L."/>
            <person name="Xie Z."/>
            <person name="Zhang Y."/>
            <person name="Zwaans B.M."/>
            <person name="Skinner M.E."/>
            <person name="Lombard D.B."/>
            <person name="Zhao Y."/>
        </authorList>
    </citation>
    <scope>ACETYLATION [LARGE SCALE ANALYSIS] AT LYS-22</scope>
    <scope>IDENTIFICATION BY MASS SPECTROMETRY [LARGE SCALE ANALYSIS]</scope>
    <source>
        <tissue>Embryonic fibroblast</tissue>
    </source>
</reference>
<reference key="10">
    <citation type="journal article" date="2015" name="Andrology">
        <title>A novel acrosomal protein, IQCF1, involved in sperm capacitation and the acrosome reaction.</title>
        <authorList>
            <person name="Fang P."/>
            <person name="Xu W."/>
            <person name="Li D."/>
            <person name="Zhao X."/>
            <person name="Dai J."/>
            <person name="Wang Z."/>
            <person name="Yan X."/>
            <person name="Qin M."/>
            <person name="Zhang Y."/>
            <person name="Xu C."/>
            <person name="Wang L."/>
            <person name="Qiao Z."/>
        </authorList>
    </citation>
    <scope>INTERACTION WITH IQCF1</scope>
</reference>
<reference key="11">
    <citation type="journal article" date="2014" name="Elife">
        <title>Synaptotagmin 7 functions as a Ca2+-sensor for synaptic vesicle replenishment.</title>
        <authorList>
            <person name="Liu H."/>
            <person name="Bai H."/>
            <person name="Hui E."/>
            <person name="Yang L."/>
            <person name="Evans C.S."/>
            <person name="Wang Z."/>
            <person name="Kwon S.E."/>
            <person name="Chapman E.R."/>
        </authorList>
    </citation>
    <scope>INTERACTION WITH SYT7</scope>
</reference>
<sequence>MADQLTEEQIAEFKEAFSLFDKDGDGTITTKELGTVMRSLGQNPTEAELQDMINEVDADGNGTIDFPEFLTMMARKMKDTDSEEEIREAFRVFDKDGNGYISAAELRHVMTNLGEKLTDEEVDEMIREADIDGDGQVNYEEFVQMMTAK</sequence>
<feature type="initiator methionine" description="Removed" evidence="11">
    <location>
        <position position="1"/>
    </location>
</feature>
<feature type="chain" id="PRO_0000439937" description="Calmodulin-3">
    <location>
        <begin position="2"/>
        <end position="149"/>
    </location>
</feature>
<feature type="domain" description="EF-hand 1" evidence="7">
    <location>
        <begin position="8"/>
        <end position="43"/>
    </location>
</feature>
<feature type="domain" description="EF-hand 2" evidence="7">
    <location>
        <begin position="44"/>
        <end position="79"/>
    </location>
</feature>
<feature type="domain" description="EF-hand 3" evidence="7">
    <location>
        <begin position="81"/>
        <end position="116"/>
    </location>
</feature>
<feature type="domain" description="EF-hand 4" evidence="7">
    <location>
        <begin position="117"/>
        <end position="149"/>
    </location>
</feature>
<feature type="region of interest" description="Necessary and sufficient for interaction with PCP4" evidence="2">
    <location>
        <begin position="77"/>
        <end position="149"/>
    </location>
</feature>
<feature type="binding site" evidence="7">
    <location>
        <position position="21"/>
    </location>
    <ligand>
        <name>Ca(2+)</name>
        <dbReference type="ChEBI" id="CHEBI:29108"/>
        <label>1</label>
    </ligand>
</feature>
<feature type="binding site" evidence="7">
    <location>
        <position position="23"/>
    </location>
    <ligand>
        <name>Ca(2+)</name>
        <dbReference type="ChEBI" id="CHEBI:29108"/>
        <label>1</label>
    </ligand>
</feature>
<feature type="binding site" evidence="7">
    <location>
        <position position="25"/>
    </location>
    <ligand>
        <name>Ca(2+)</name>
        <dbReference type="ChEBI" id="CHEBI:29108"/>
        <label>1</label>
    </ligand>
</feature>
<feature type="binding site" evidence="7">
    <location>
        <position position="27"/>
    </location>
    <ligand>
        <name>Ca(2+)</name>
        <dbReference type="ChEBI" id="CHEBI:29108"/>
        <label>1</label>
    </ligand>
</feature>
<feature type="binding site" evidence="7">
    <location>
        <position position="32"/>
    </location>
    <ligand>
        <name>Ca(2+)</name>
        <dbReference type="ChEBI" id="CHEBI:29108"/>
        <label>1</label>
    </ligand>
</feature>
<feature type="binding site" evidence="7">
    <location>
        <position position="57"/>
    </location>
    <ligand>
        <name>Ca(2+)</name>
        <dbReference type="ChEBI" id="CHEBI:29108"/>
        <label>2</label>
    </ligand>
</feature>
<feature type="binding site" evidence="7">
    <location>
        <position position="59"/>
    </location>
    <ligand>
        <name>Ca(2+)</name>
        <dbReference type="ChEBI" id="CHEBI:29108"/>
        <label>2</label>
    </ligand>
</feature>
<feature type="binding site" evidence="7">
    <location>
        <position position="61"/>
    </location>
    <ligand>
        <name>Ca(2+)</name>
        <dbReference type="ChEBI" id="CHEBI:29108"/>
        <label>2</label>
    </ligand>
</feature>
<feature type="binding site" evidence="7">
    <location>
        <position position="63"/>
    </location>
    <ligand>
        <name>Ca(2+)</name>
        <dbReference type="ChEBI" id="CHEBI:29108"/>
        <label>2</label>
    </ligand>
</feature>
<feature type="binding site" evidence="7">
    <location>
        <position position="68"/>
    </location>
    <ligand>
        <name>Ca(2+)</name>
        <dbReference type="ChEBI" id="CHEBI:29108"/>
        <label>2</label>
    </ligand>
</feature>
<feature type="binding site" evidence="7">
    <location>
        <position position="94"/>
    </location>
    <ligand>
        <name>Ca(2+)</name>
        <dbReference type="ChEBI" id="CHEBI:29108"/>
        <label>3</label>
    </ligand>
</feature>
<feature type="binding site" evidence="7">
    <location>
        <position position="96"/>
    </location>
    <ligand>
        <name>Ca(2+)</name>
        <dbReference type="ChEBI" id="CHEBI:29108"/>
        <label>3</label>
    </ligand>
</feature>
<feature type="binding site" evidence="7">
    <location>
        <position position="98"/>
    </location>
    <ligand>
        <name>Ca(2+)</name>
        <dbReference type="ChEBI" id="CHEBI:29108"/>
        <label>3</label>
    </ligand>
</feature>
<feature type="binding site" evidence="7">
    <location>
        <position position="100"/>
    </location>
    <ligand>
        <name>Ca(2+)</name>
        <dbReference type="ChEBI" id="CHEBI:29108"/>
        <label>3</label>
    </ligand>
</feature>
<feature type="binding site" evidence="7">
    <location>
        <position position="105"/>
    </location>
    <ligand>
        <name>Ca(2+)</name>
        <dbReference type="ChEBI" id="CHEBI:29108"/>
        <label>3</label>
    </ligand>
</feature>
<feature type="binding site" evidence="7">
    <location>
        <position position="130"/>
    </location>
    <ligand>
        <name>Ca(2+)</name>
        <dbReference type="ChEBI" id="CHEBI:29108"/>
        <label>4</label>
    </ligand>
</feature>
<feature type="binding site" evidence="7">
    <location>
        <position position="132"/>
    </location>
    <ligand>
        <name>Ca(2+)</name>
        <dbReference type="ChEBI" id="CHEBI:29108"/>
        <label>4</label>
    </ligand>
</feature>
<feature type="binding site" evidence="7">
    <location>
        <position position="134"/>
    </location>
    <ligand>
        <name>Ca(2+)</name>
        <dbReference type="ChEBI" id="CHEBI:29108"/>
        <label>4</label>
    </ligand>
</feature>
<feature type="binding site" evidence="7">
    <location>
        <position position="136"/>
    </location>
    <ligand>
        <name>Ca(2+)</name>
        <dbReference type="ChEBI" id="CHEBI:29108"/>
        <label>4</label>
    </ligand>
</feature>
<feature type="binding site" evidence="7">
    <location>
        <position position="141"/>
    </location>
    <ligand>
        <name>Ca(2+)</name>
        <dbReference type="ChEBI" id="CHEBI:29108"/>
        <label>4</label>
    </ligand>
</feature>
<feature type="modified residue" description="N-acetylalanine" evidence="11">
    <location>
        <position position="2"/>
    </location>
</feature>
<feature type="modified residue" description="N6-acetyllysine; alternate" evidence="16">
    <location>
        <position position="22"/>
    </location>
</feature>
<feature type="modified residue" description="Phosphothreonine; by CaMK4" evidence="4">
    <location>
        <position position="45"/>
    </location>
</feature>
<feature type="modified residue" description="Phosphoserine" evidence="2">
    <location>
        <position position="82"/>
    </location>
</feature>
<feature type="modified residue" description="N6-acetyllysine" evidence="2">
    <location>
        <position position="95"/>
    </location>
</feature>
<feature type="modified residue" description="Phosphotyrosine" evidence="14 15">
    <location>
        <position position="100"/>
    </location>
</feature>
<feature type="modified residue" description="Phosphoserine" evidence="15">
    <location>
        <position position="102"/>
    </location>
</feature>
<feature type="modified residue" description="Phosphothreonine" evidence="2">
    <location>
        <position position="111"/>
    </location>
</feature>
<feature type="modified residue" description="N6,N6,N6-trimethyllysine; alternate" evidence="2">
    <location>
        <position position="116"/>
    </location>
</feature>
<feature type="modified residue" description="N6-methyllysine; alternate" evidence="2">
    <location>
        <position position="116"/>
    </location>
</feature>
<feature type="modified residue" description="Phosphotyrosine" evidence="2">
    <location>
        <position position="139"/>
    </location>
</feature>
<feature type="cross-link" description="Glycyl lysine isopeptide (Lys-Gly) (interchain with G-Cter in SUMO2); alternate" evidence="2">
    <location>
        <position position="22"/>
    </location>
</feature>
<feature type="cross-link" description="Glycyl lysine isopeptide (Lys-Gly) (interchain with G-Cter in ubiquitin); alternate" evidence="5">
    <location>
        <position position="22"/>
    </location>
</feature>
<feature type="sequence conflict" description="In Ref. 2; BAC39089." evidence="12" ref="2">
    <original>F</original>
    <variation>S</variation>
    <location>
        <position position="142"/>
    </location>
</feature>
<evidence type="ECO:0000250" key="1"/>
<evidence type="ECO:0000250" key="2">
    <source>
        <dbReference type="UniProtKB" id="P0DP25"/>
    </source>
</evidence>
<evidence type="ECO:0000250" key="3">
    <source>
        <dbReference type="UniProtKB" id="P0DP26"/>
    </source>
</evidence>
<evidence type="ECO:0000250" key="4">
    <source>
        <dbReference type="UniProtKB" id="P0DP31"/>
    </source>
</evidence>
<evidence type="ECO:0000250" key="5">
    <source>
        <dbReference type="UniProtKB" id="P62157"/>
    </source>
</evidence>
<evidence type="ECO:0000250" key="6">
    <source>
        <dbReference type="UniProtKB" id="P62161"/>
    </source>
</evidence>
<evidence type="ECO:0000255" key="7">
    <source>
        <dbReference type="PROSITE-ProRule" id="PRU00448"/>
    </source>
</evidence>
<evidence type="ECO:0000269" key="8">
    <source>
    </source>
</evidence>
<evidence type="ECO:0000269" key="9">
    <source>
    </source>
</evidence>
<evidence type="ECO:0000269" key="10">
    <source>
    </source>
</evidence>
<evidence type="ECO:0000269" key="11">
    <source ref="4"/>
</evidence>
<evidence type="ECO:0000305" key="12"/>
<evidence type="ECO:0000312" key="13">
    <source>
        <dbReference type="MGI" id="MGI:103249"/>
    </source>
</evidence>
<evidence type="ECO:0007744" key="14">
    <source>
    </source>
</evidence>
<evidence type="ECO:0007744" key="15">
    <source>
    </source>
</evidence>
<evidence type="ECO:0007744" key="16">
    <source>
    </source>
</evidence>
<proteinExistence type="evidence at protein level"/>
<name>CALM3_MOUSE</name>
<comment type="function">
    <text evidence="2">Calmodulin acts as part of a calcium signal transduction pathway by mediating the control of a large number of enzymes, ion channels, aquaporins and other proteins through calcium-binding. Calcium-binding is required for the activation of calmodulin. Among the enzymes to be stimulated by the calmodulin-calcium complex are a number of protein kinases, such as myosin light-chain kinases and calmodulin-dependent protein kinase type II (CaMK2), and phosphatases. Together with CCP110 and centrin, is involved in a genetic pathway that regulates the centrosome cycle and progression through cytokinesis.</text>
</comment>
<comment type="subunit">
    <text evidence="2 3 6 8 9 10">Interacts with CEP97, CCP110, MYO1C, TTN/titin and SRY. Interacts with MYO10. Interacts with RRAD (By similarity). Interacts with USP6; the interaction is calcium dependent (By similarity). Interacts with CDK5RAP2. Interacts with SCN5A (By similarity). Interacts with FCHO1. Interacts with MIP in a 1:2 stoichiometry; the interaction with the cytoplasmic domains from two MIP subunits promotes MIP water channel closure. Interacts with ORAI1; this may play a role in the regulation of ORAI1-mediated calcium transport (By similarity). Interacts with RYR1 (PubMed:18650434). Interacts with MYO5A (By similarity). Interacts with IQCF1 (PubMed:25380116). Interacts with SYT7 (PubMed:24569478). Interacts with CEACAM1 (via cytoplasmic domain); this interaction is in a calcium dependent manner and reduces homophilic cell adhesion through dissociation of dimer (By similarity). Interacts with RYR2; regulates RYR2 calcium-release channel activity (PubMed:18650434). Interacts with PCP4; regulates calmodulin calcium-binding (By similarity). Interacts with the heterotetrameric KCNQ2 and KCNQ3 channel; the interaction is calcium-independent, constitutive and participates in the proper assembly of a functional heterotetrameric M channel (By similarity). Component of the SIFI complex (By similarity).</text>
</comment>
<comment type="subcellular location">
    <subcellularLocation>
        <location>Cytoplasm</location>
        <location>Cytoskeleton</location>
        <location>Spindle</location>
    </subcellularLocation>
    <subcellularLocation>
        <location>Cytoplasm</location>
        <location>Cytoskeleton</location>
        <location>Spindle pole</location>
    </subcellularLocation>
    <text evidence="1">Distributed throughout the cell during interphase, but during mitosis becomes dramatically localized to the spindle poles and the spindle microtubules.</text>
</comment>
<comment type="PTM">
    <text evidence="1">Ubiquitination results in a strongly decreased activity.</text>
</comment>
<comment type="PTM">
    <text evidence="1">Phosphorylation results in a decreased activity.</text>
</comment>
<comment type="miscellaneous">
    <text evidence="2">This protein has four functional calcium-binding sites.</text>
</comment>
<comment type="similarity">
    <text evidence="12">Belongs to the calmodulin family.</text>
</comment>
<comment type="sequence caution" evidence="12">
    <conflict type="erroneous translation">
        <sequence resource="EMBL-CDS" id="BAC39089"/>
    </conflict>
    <text>Wrong CDS prediction.</text>
</comment>